<dbReference type="EMBL" id="AY034061">
    <property type="protein sequence ID" value="AAK54449.1"/>
    <property type="molecule type" value="mRNA"/>
</dbReference>
<dbReference type="EMBL" id="CR513789">
    <property type="status" value="NOT_ANNOTATED_CDS"/>
    <property type="molecule type" value="Genomic_DNA"/>
</dbReference>
<dbReference type="EMBL" id="BC163522">
    <property type="protein sequence ID" value="AAI63522.1"/>
    <property type="molecule type" value="mRNA"/>
</dbReference>
<dbReference type="RefSeq" id="NP_001300658.1">
    <molecule id="Q90YL6-1"/>
    <property type="nucleotide sequence ID" value="NM_001313729.1"/>
</dbReference>
<dbReference type="RefSeq" id="XP_009294501.1">
    <molecule id="Q90YL6-2"/>
    <property type="nucleotide sequence ID" value="XM_009296226.4"/>
</dbReference>
<dbReference type="SMR" id="Q90YL6"/>
<dbReference type="FunCoup" id="Q90YL6">
    <property type="interactions" value="1103"/>
</dbReference>
<dbReference type="STRING" id="7955.ENSDARP00000141532"/>
<dbReference type="PaxDb" id="7955-ENSDARP00000106755"/>
<dbReference type="GeneID" id="30749"/>
<dbReference type="KEGG" id="dre:30749"/>
<dbReference type="AGR" id="ZFIN:ZDB-GENE-990415-79"/>
<dbReference type="CTD" id="2494"/>
<dbReference type="ZFIN" id="ZDB-GENE-990415-79">
    <property type="gene designation" value="nr5a2"/>
</dbReference>
<dbReference type="eggNOG" id="KOG4218">
    <property type="taxonomic scope" value="Eukaryota"/>
</dbReference>
<dbReference type="HOGENOM" id="CLU_011437_0_0_1"/>
<dbReference type="OMA" id="DNMQVSQ"/>
<dbReference type="OrthoDB" id="2968690at2759"/>
<dbReference type="TreeFam" id="TF350737"/>
<dbReference type="Proteomes" id="UP000000437">
    <property type="component" value="Chromosome 22"/>
</dbReference>
<dbReference type="Bgee" id="ENSDARG00000100940">
    <property type="expression patterns" value="Expressed in spinal cord and 52 other cell types or tissues"/>
</dbReference>
<dbReference type="GO" id="GO:0005694">
    <property type="term" value="C:chromosome"/>
    <property type="evidence" value="ECO:0007669"/>
    <property type="project" value="UniProtKB-SubCell"/>
</dbReference>
<dbReference type="GO" id="GO:0090575">
    <property type="term" value="C:RNA polymerase II transcription regulator complex"/>
    <property type="evidence" value="ECO:0000318"/>
    <property type="project" value="GO_Central"/>
</dbReference>
<dbReference type="GO" id="GO:0003677">
    <property type="term" value="F:DNA binding"/>
    <property type="evidence" value="ECO:0000314"/>
    <property type="project" value="ZFIN"/>
</dbReference>
<dbReference type="GO" id="GO:0003700">
    <property type="term" value="F:DNA-binding transcription factor activity"/>
    <property type="evidence" value="ECO:0000314"/>
    <property type="project" value="ZFIN"/>
</dbReference>
<dbReference type="GO" id="GO:0004879">
    <property type="term" value="F:nuclear receptor activity"/>
    <property type="evidence" value="ECO:0000250"/>
    <property type="project" value="UniProtKB"/>
</dbReference>
<dbReference type="GO" id="GO:0000978">
    <property type="term" value="F:RNA polymerase II cis-regulatory region sequence-specific DNA binding"/>
    <property type="evidence" value="ECO:0000318"/>
    <property type="project" value="GO_Central"/>
</dbReference>
<dbReference type="GO" id="GO:0008270">
    <property type="term" value="F:zinc ion binding"/>
    <property type="evidence" value="ECO:0007669"/>
    <property type="project" value="UniProtKB-KW"/>
</dbReference>
<dbReference type="GO" id="GO:0051216">
    <property type="term" value="P:cartilage development"/>
    <property type="evidence" value="ECO:0000315"/>
    <property type="project" value="UniProtKB"/>
</dbReference>
<dbReference type="GO" id="GO:0048565">
    <property type="term" value="P:digestive tract development"/>
    <property type="evidence" value="ECO:0000315"/>
    <property type="project" value="ZFIN"/>
</dbReference>
<dbReference type="GO" id="GO:0031017">
    <property type="term" value="P:exocrine pancreas development"/>
    <property type="evidence" value="ECO:0000315"/>
    <property type="project" value="ZFIN"/>
</dbReference>
<dbReference type="GO" id="GO:0061017">
    <property type="term" value="P:hepatoblast differentiation"/>
    <property type="evidence" value="ECO:0000315"/>
    <property type="project" value="ZFIN"/>
</dbReference>
<dbReference type="GO" id="GO:0009755">
    <property type="term" value="P:hormone-mediated signaling pathway"/>
    <property type="evidence" value="ECO:0000318"/>
    <property type="project" value="GO_Central"/>
</dbReference>
<dbReference type="GO" id="GO:0001889">
    <property type="term" value="P:liver development"/>
    <property type="evidence" value="ECO:0000315"/>
    <property type="project" value="ZFIN"/>
</dbReference>
<dbReference type="GO" id="GO:2001051">
    <property type="term" value="P:positive regulation of tendon cell differentiation"/>
    <property type="evidence" value="ECO:0000315"/>
    <property type="project" value="UniProtKB"/>
</dbReference>
<dbReference type="GO" id="GO:0006355">
    <property type="term" value="P:regulation of DNA-templated transcription"/>
    <property type="evidence" value="ECO:0000316"/>
    <property type="project" value="ZFIN"/>
</dbReference>
<dbReference type="GO" id="GO:0006357">
    <property type="term" value="P:regulation of transcription by RNA polymerase II"/>
    <property type="evidence" value="ECO:0000318"/>
    <property type="project" value="GO_Central"/>
</dbReference>
<dbReference type="GO" id="GO:0035019">
    <property type="term" value="P:somatic stem cell population maintenance"/>
    <property type="evidence" value="ECO:0000250"/>
    <property type="project" value="UniProtKB"/>
</dbReference>
<dbReference type="GO" id="GO:0009888">
    <property type="term" value="P:tissue development"/>
    <property type="evidence" value="ECO:0000318"/>
    <property type="project" value="GO_Central"/>
</dbReference>
<dbReference type="CDD" id="cd07167">
    <property type="entry name" value="NR_DBD_Lrh-1_like"/>
    <property type="match status" value="1"/>
</dbReference>
<dbReference type="CDD" id="cd07069">
    <property type="entry name" value="NR_LBD_Lrh-1"/>
    <property type="match status" value="1"/>
</dbReference>
<dbReference type="FunFam" id="3.30.50.10:FF:000006">
    <property type="entry name" value="Nuclear receptor subfamily 5 group A member"/>
    <property type="match status" value="1"/>
</dbReference>
<dbReference type="FunFam" id="1.10.565.10:FF:000011">
    <property type="entry name" value="Nuclear receptor subfamily 5, group A, member 2"/>
    <property type="match status" value="1"/>
</dbReference>
<dbReference type="Gene3D" id="3.30.50.10">
    <property type="entry name" value="Erythroid Transcription Factor GATA-1, subunit A"/>
    <property type="match status" value="1"/>
</dbReference>
<dbReference type="Gene3D" id="1.10.565.10">
    <property type="entry name" value="Retinoid X Receptor"/>
    <property type="match status" value="1"/>
</dbReference>
<dbReference type="InterPro" id="IPR035500">
    <property type="entry name" value="NHR-like_dom_sf"/>
</dbReference>
<dbReference type="InterPro" id="IPR016355">
    <property type="entry name" value="NR5-like"/>
</dbReference>
<dbReference type="InterPro" id="IPR000536">
    <property type="entry name" value="Nucl_hrmn_rcpt_lig-bd"/>
</dbReference>
<dbReference type="InterPro" id="IPR001723">
    <property type="entry name" value="Nuclear_hrmn_rcpt"/>
</dbReference>
<dbReference type="InterPro" id="IPR001628">
    <property type="entry name" value="Znf_hrmn_rcpt"/>
</dbReference>
<dbReference type="InterPro" id="IPR013088">
    <property type="entry name" value="Znf_NHR/GATA"/>
</dbReference>
<dbReference type="PANTHER" id="PTHR24086:SF49">
    <property type="entry name" value="NR5A2 PROTEIN"/>
    <property type="match status" value="1"/>
</dbReference>
<dbReference type="PANTHER" id="PTHR24086">
    <property type="entry name" value="NUCLEAR RECEPTOR SUBFAMILY 5 GROUP A"/>
    <property type="match status" value="1"/>
</dbReference>
<dbReference type="Pfam" id="PF00104">
    <property type="entry name" value="Hormone_recep"/>
    <property type="match status" value="1"/>
</dbReference>
<dbReference type="Pfam" id="PF00105">
    <property type="entry name" value="zf-C4"/>
    <property type="match status" value="1"/>
</dbReference>
<dbReference type="PIRSF" id="PIRSF002530">
    <property type="entry name" value="Nuc_orph_FTZ-F1"/>
    <property type="match status" value="1"/>
</dbReference>
<dbReference type="PRINTS" id="PR00398">
    <property type="entry name" value="STRDHORMONER"/>
</dbReference>
<dbReference type="PRINTS" id="PR00047">
    <property type="entry name" value="STROIDFINGER"/>
</dbReference>
<dbReference type="SMART" id="SM00430">
    <property type="entry name" value="HOLI"/>
    <property type="match status" value="1"/>
</dbReference>
<dbReference type="SMART" id="SM00399">
    <property type="entry name" value="ZnF_C4"/>
    <property type="match status" value="1"/>
</dbReference>
<dbReference type="SUPFAM" id="SSF57716">
    <property type="entry name" value="Glucocorticoid receptor-like (DNA-binding domain)"/>
    <property type="match status" value="1"/>
</dbReference>
<dbReference type="SUPFAM" id="SSF48508">
    <property type="entry name" value="Nuclear receptor ligand-binding domain"/>
    <property type="match status" value="1"/>
</dbReference>
<dbReference type="PROSITE" id="PS51843">
    <property type="entry name" value="NR_LBD"/>
    <property type="match status" value="1"/>
</dbReference>
<dbReference type="PROSITE" id="PS00031">
    <property type="entry name" value="NUCLEAR_REC_DBD_1"/>
    <property type="match status" value="1"/>
</dbReference>
<dbReference type="PROSITE" id="PS51030">
    <property type="entry name" value="NUCLEAR_REC_DBD_2"/>
    <property type="match status" value="1"/>
</dbReference>
<evidence type="ECO:0000250" key="1">
    <source>
        <dbReference type="UniProtKB" id="O00482"/>
    </source>
</evidence>
<evidence type="ECO:0000250" key="2">
    <source>
        <dbReference type="UniProtKB" id="P45448"/>
    </source>
</evidence>
<evidence type="ECO:0000255" key="3">
    <source>
        <dbReference type="PROSITE-ProRule" id="PRU00407"/>
    </source>
</evidence>
<evidence type="ECO:0000255" key="4">
    <source>
        <dbReference type="PROSITE-ProRule" id="PRU01189"/>
    </source>
</evidence>
<evidence type="ECO:0000256" key="5">
    <source>
        <dbReference type="SAM" id="MobiDB-lite"/>
    </source>
</evidence>
<evidence type="ECO:0000269" key="6">
    <source>
    </source>
</evidence>
<evidence type="ECO:0000269" key="7">
    <source>
    </source>
</evidence>
<evidence type="ECO:0000269" key="8">
    <source>
    </source>
</evidence>
<evidence type="ECO:0000269" key="9">
    <source>
    </source>
</evidence>
<evidence type="ECO:0000269" key="10">
    <source>
    </source>
</evidence>
<evidence type="ECO:0000269" key="11">
    <source>
    </source>
</evidence>
<evidence type="ECO:0000303" key="12">
    <source>
    </source>
</evidence>
<evidence type="ECO:0000303" key="13">
    <source>
    </source>
</evidence>
<evidence type="ECO:0000305" key="14"/>
<evidence type="ECO:0000312" key="15">
    <source>
        <dbReference type="EMBL" id="AAI63522.1"/>
    </source>
</evidence>
<evidence type="ECO:0000312" key="16">
    <source>
        <dbReference type="EMBL" id="AAK54449.1"/>
    </source>
</evidence>
<evidence type="ECO:0000312" key="17">
    <source>
        <dbReference type="ZFIN" id="ZDB-GENE-990415-79"/>
    </source>
</evidence>
<keyword id="KW-0025">Alternative splicing</keyword>
<keyword id="KW-0158">Chromosome</keyword>
<keyword id="KW-0238">DNA-binding</keyword>
<keyword id="KW-0479">Metal-binding</keyword>
<keyword id="KW-0539">Nucleus</keyword>
<keyword id="KW-0675">Receptor</keyword>
<keyword id="KW-1185">Reference proteome</keyword>
<keyword id="KW-0804">Transcription</keyword>
<keyword id="KW-0805">Transcription regulation</keyword>
<keyword id="KW-0862">Zinc</keyword>
<keyword id="KW-0863">Zinc-finger</keyword>
<gene>
    <name evidence="17" type="primary">nr5a2</name>
    <name evidence="13" type="synonym">ff1a</name>
</gene>
<name>NR5A2_DANRE</name>
<accession>Q90YL6</accession>
<accession>A0A0R4IW70</accession>
<accession>A0A8M3AXL9</accession>
<accession>A0A8N7XJG3</accession>
<accession>B3DJL1</accession>
<protein>
    <recommendedName>
        <fullName evidence="14">Nuclear receptor subfamily 5 group A member 2</fullName>
    </recommendedName>
    <alternativeName>
        <fullName evidence="13">FTZ-F1 homolog</fullName>
        <shortName evidence="13">zFF1</shortName>
    </alternativeName>
    <alternativeName>
        <fullName evidence="12">Liver receptor homolog 1</fullName>
        <shortName evidence="12">LRH-1</shortName>
    </alternativeName>
</protein>
<sequence>MLPKVESEYLGLARSHGEQGHMPGNMQAPQFKMMDYSYDEDLDEMCPVCGDKVSGYHYGLLTCESCKGFFKRTVQNNKRYTCIENQSCQIDKTQRKRCPYCRFQKCLTVGMKLEAVRADRMRGGRNKFGPMYKRDRALKQQKKALIRANGLKLEAMTQVMQTVPADLTITSAIQNIHSASKGLPLSHHHHHHHHHHHHSSSSAGLPPADFDRSPFVTSPVSMAMPPHAGGLQGYQAYGHFQSRTIKSEYPDPYTSSPESLMGYPYVEAYAGGSPPSFPHLVVELLKCEPDEPQVQAKILAYLQQEQASRGKHEKLNTFGLMCKMADQTLFSIVEWARSSIFFRELKVDDQMKLLQNCWSELLILDHVFRQVMHAKEGSILLVTGQQVDYALIASQAGATLNNLLSHAQELVSKLRSLQLDQREFVCLKFLVLFSLDVKNLENFHLVESVQEQVNAALLDYVMCNYPQQTDKFGQLLLRLPEIRAISLQAEEYLYYKHLNGDVPCNNLLIEMLHAKRA</sequence>
<comment type="function">
    <text evidence="2 6 7 8 9 11">Orphan nuclear receptor that binds DNA as a monomer to the 5'-TCAAGGCCA-3' sequence and controls expression of target genes: regulates key biological processes, such as cholesterol and bile acid synthesis pathways, as well as cartilage, liver and pancreas morphogenesis (PubMed:10747875, PubMed:14517294, PubMed:18950725, PubMed:27474396, PubMed:36905926). Ligand-binding causes conformational change which causes recruitment of coactivators, promoting target gene activation (By similarity). The specific ligand is unknown, but specific phospholipids, such as phosphatidylethanolamine, phosphatidylserine, dilauroyl phosphatidylcholine and diundecanoyl phosphatidylcholine can act as ligand in vitro (By similarity). Acts as a pioneer transcription factor, which unwraps target DNA from histones and elicits local opening of closed chromatin (By similarity). Involved in the formation of connective tissue in lower jaw (PubMed:36905926).</text>
</comment>
<comment type="function">
    <molecule>Isoform 3</molecule>
    <text evidence="6">Lacks transcription factor activity; unable to activate expression of target genes.</text>
</comment>
<comment type="subunit">
    <text evidence="1">Monomer; Binds DNA as a monomer.</text>
</comment>
<comment type="subcellular location">
    <subcellularLocation>
        <location evidence="2">Nucleus</location>
    </subcellularLocation>
    <subcellularLocation>
        <location evidence="2">Chromosome</location>
    </subcellularLocation>
</comment>
<comment type="alternative products">
    <event type="alternative splicing"/>
    <isoform>
        <id>Q90YL6-1</id>
        <name>1</name>
        <name evidence="13">ff1a</name>
        <name evidence="13">zFF1A</name>
        <sequence type="displayed"/>
    </isoform>
    <isoform>
        <id>Q90YL6-2</id>
        <name>2</name>
        <sequence type="described" ref="VSP_062510"/>
    </isoform>
    <isoform>
        <id>Q90YL6-3</id>
        <name>3</name>
        <name evidence="13">ff1b</name>
        <sequence type="described" ref="VSP_062511"/>
    </isoform>
</comment>
<comment type="developmental stage">
    <text evidence="9">Expressed in the developing endoderm of embryos.</text>
</comment>
<comment type="domain">
    <text evidence="2">The C-terminal extension (CTE) loop competes with a DNA minor groove anchor of the nucleosome and releases entry-exit site DNA, thereby promoting opening of closed chromatin.</text>
</comment>
<comment type="disruption phenotype">
    <text evidence="9 10 11">Larvae lethality from 9 to 14 days post fertilization (dpf) (PubMed:28642062). Fishes show an open mouth and an enlarged Meckel's cartilage of the lower jaw, but no other craniofacial skeletal defects at 6 and 10 dpf (PubMed:36905926). Impaired development of the exocrine pancreas and liver, while leaving the endocrine pancreas intact (PubMed:27474396). In the developing liver, defects in hepatic progenitor outgrowth and differentiation are observed (PubMed:27474396).</text>
</comment>
<comment type="similarity">
    <text evidence="14">Belongs to the nuclear hormone receptor family. NR5 subfamily.</text>
</comment>
<feature type="chain" id="PRO_0000461916" description="Nuclear receptor subfamily 5 group A member 2">
    <location>
        <begin position="1"/>
        <end position="517"/>
    </location>
</feature>
<feature type="domain" description="NR LBD" evidence="4">
    <location>
        <begin position="276"/>
        <end position="515"/>
    </location>
</feature>
<feature type="DNA-binding region" description="Nuclear receptor" evidence="3">
    <location>
        <begin position="43"/>
        <end position="118"/>
    </location>
</feature>
<feature type="zinc finger region" description="NR C4-type" evidence="3">
    <location>
        <begin position="46"/>
        <end position="66"/>
    </location>
</feature>
<feature type="zinc finger region" description="NR C4-type" evidence="3">
    <location>
        <begin position="82"/>
        <end position="101"/>
    </location>
</feature>
<feature type="region of interest" description="C-terminal extension (CTE)" evidence="1">
    <location>
        <begin position="112"/>
        <end position="127"/>
    </location>
</feature>
<feature type="region of interest" description="Disordered" evidence="5">
    <location>
        <begin position="182"/>
        <end position="211"/>
    </location>
</feature>
<feature type="region of interest" description="AF-2" evidence="4">
    <location>
        <begin position="504"/>
        <end position="515"/>
    </location>
</feature>
<feature type="short sequence motif" description="FTZ-F1 box" evidence="1">
    <location>
        <begin position="128"/>
        <end position="147"/>
    </location>
</feature>
<feature type="compositionally biased region" description="Basic residues" evidence="5">
    <location>
        <begin position="186"/>
        <end position="199"/>
    </location>
</feature>
<feature type="binding site" evidence="1">
    <location>
        <position position="46"/>
    </location>
    <ligand>
        <name>Zn(2+)</name>
        <dbReference type="ChEBI" id="CHEBI:29105"/>
        <label>1</label>
    </ligand>
</feature>
<feature type="binding site" evidence="1">
    <location>
        <position position="49"/>
    </location>
    <ligand>
        <name>Zn(2+)</name>
        <dbReference type="ChEBI" id="CHEBI:29105"/>
        <label>1</label>
    </ligand>
</feature>
<feature type="binding site" evidence="1">
    <location>
        <position position="63"/>
    </location>
    <ligand>
        <name>Zn(2+)</name>
        <dbReference type="ChEBI" id="CHEBI:29105"/>
        <label>1</label>
    </ligand>
</feature>
<feature type="binding site" evidence="1">
    <location>
        <position position="66"/>
    </location>
    <ligand>
        <name>Zn(2+)</name>
        <dbReference type="ChEBI" id="CHEBI:29105"/>
        <label>1</label>
    </ligand>
</feature>
<feature type="binding site" evidence="1">
    <location>
        <position position="82"/>
    </location>
    <ligand>
        <name>Zn(2+)</name>
        <dbReference type="ChEBI" id="CHEBI:29105"/>
        <label>2</label>
    </ligand>
</feature>
<feature type="binding site" evidence="1">
    <location>
        <position position="88"/>
    </location>
    <ligand>
        <name>Zn(2+)</name>
        <dbReference type="ChEBI" id="CHEBI:29105"/>
        <label>2</label>
    </ligand>
</feature>
<feature type="binding site" evidence="1">
    <location>
        <position position="98"/>
    </location>
    <ligand>
        <name>Zn(2+)</name>
        <dbReference type="ChEBI" id="CHEBI:29105"/>
        <label>2</label>
    </ligand>
</feature>
<feature type="binding site" evidence="1">
    <location>
        <position position="101"/>
    </location>
    <ligand>
        <name>Zn(2+)</name>
        <dbReference type="ChEBI" id="CHEBI:29105"/>
        <label>2</label>
    </ligand>
</feature>
<feature type="binding site" evidence="1">
    <location>
        <begin position="397"/>
        <end position="400"/>
    </location>
    <ligand>
        <name>a phospholipid derivative</name>
        <dbReference type="ChEBI" id="CHEBI:16247"/>
    </ligand>
</feature>
<feature type="binding site" evidence="1">
    <location>
        <position position="492"/>
    </location>
    <ligand>
        <name>a phospholipid derivative</name>
        <dbReference type="ChEBI" id="CHEBI:16247"/>
    </ligand>
</feature>
<feature type="binding site" evidence="1">
    <location>
        <position position="496"/>
    </location>
    <ligand>
        <name>a phospholipid derivative</name>
        <dbReference type="ChEBI" id="CHEBI:16247"/>
    </ligand>
</feature>
<feature type="splice variant" id="VSP_062510" description="In isoform 2.">
    <original>MLPKVESEYLGLARSHGEQGHMPGNMQ</original>
    <variation>MSSSFESELGQRDCKDL</variation>
    <location>
        <begin position="1"/>
        <end position="27"/>
    </location>
</feature>
<feature type="splice variant" id="VSP_062511" description="In isoform 3.">
    <original>LDVKNLENFHLVESVQEQVNAALLDYVMCNYPQQTDKFGQLLLRLPEIRAISLQAEEYLYYKHLNGDVPCNNLLIEMLHAKRA</original>
    <variation>LGE</variation>
    <location>
        <begin position="435"/>
        <end position="517"/>
    </location>
</feature>
<feature type="mutagenesis site" description="Decreased ability to activate target expression of genes." evidence="6">
    <original>LL</original>
    <variation>AA</variation>
    <location>
        <begin position="475"/>
        <end position="476"/>
    </location>
</feature>
<organism>
    <name type="scientific">Danio rerio</name>
    <name type="common">Zebrafish</name>
    <name type="synonym">Brachydanio rerio</name>
    <dbReference type="NCBI Taxonomy" id="7955"/>
    <lineage>
        <taxon>Eukaryota</taxon>
        <taxon>Metazoa</taxon>
        <taxon>Chordata</taxon>
        <taxon>Craniata</taxon>
        <taxon>Vertebrata</taxon>
        <taxon>Euteleostomi</taxon>
        <taxon>Actinopterygii</taxon>
        <taxon>Neopterygii</taxon>
        <taxon>Teleostei</taxon>
        <taxon>Ostariophysi</taxon>
        <taxon>Cypriniformes</taxon>
        <taxon>Danionidae</taxon>
        <taxon>Danioninae</taxon>
        <taxon>Danio</taxon>
    </lineage>
</organism>
<proteinExistence type="evidence at protein level"/>
<reference evidence="16" key="1">
    <citation type="submission" date="2001-05" db="EMBL/GenBank/DDBJ databases">
        <title>Full length zebrafish ff1aE cDNA.</title>
        <authorList>
            <person name="Chai C."/>
            <person name="Tan J.H."/>
            <person name="Gao W."/>
            <person name="Teh H.L."/>
            <person name="Chan W.K."/>
        </authorList>
    </citation>
    <scope>NUCLEOTIDE SEQUENCE [MRNA]</scope>
</reference>
<reference key="2">
    <citation type="journal article" date="2013" name="Nature">
        <title>The zebrafish reference genome sequence and its relationship to the human genome.</title>
        <authorList>
            <person name="Howe K."/>
            <person name="Clark M.D."/>
            <person name="Torroja C.F."/>
            <person name="Torrance J."/>
            <person name="Berthelot C."/>
            <person name="Muffato M."/>
            <person name="Collins J.E."/>
            <person name="Humphray S."/>
            <person name="McLaren K."/>
            <person name="Matthews L."/>
            <person name="McLaren S."/>
            <person name="Sealy I."/>
            <person name="Caccamo M."/>
            <person name="Churcher C."/>
            <person name="Scott C."/>
            <person name="Barrett J.C."/>
            <person name="Koch R."/>
            <person name="Rauch G.J."/>
            <person name="White S."/>
            <person name="Chow W."/>
            <person name="Kilian B."/>
            <person name="Quintais L.T."/>
            <person name="Guerra-Assuncao J.A."/>
            <person name="Zhou Y."/>
            <person name="Gu Y."/>
            <person name="Yen J."/>
            <person name="Vogel J.H."/>
            <person name="Eyre T."/>
            <person name="Redmond S."/>
            <person name="Banerjee R."/>
            <person name="Chi J."/>
            <person name="Fu B."/>
            <person name="Langley E."/>
            <person name="Maguire S.F."/>
            <person name="Laird G.K."/>
            <person name="Lloyd D."/>
            <person name="Kenyon E."/>
            <person name="Donaldson S."/>
            <person name="Sehra H."/>
            <person name="Almeida-King J."/>
            <person name="Loveland J."/>
            <person name="Trevanion S."/>
            <person name="Jones M."/>
            <person name="Quail M."/>
            <person name="Willey D."/>
            <person name="Hunt A."/>
            <person name="Burton J."/>
            <person name="Sims S."/>
            <person name="McLay K."/>
            <person name="Plumb B."/>
            <person name="Davis J."/>
            <person name="Clee C."/>
            <person name="Oliver K."/>
            <person name="Clark R."/>
            <person name="Riddle C."/>
            <person name="Elliot D."/>
            <person name="Threadgold G."/>
            <person name="Harden G."/>
            <person name="Ware D."/>
            <person name="Begum S."/>
            <person name="Mortimore B."/>
            <person name="Kerry G."/>
            <person name="Heath P."/>
            <person name="Phillimore B."/>
            <person name="Tracey A."/>
            <person name="Corby N."/>
            <person name="Dunn M."/>
            <person name="Johnson C."/>
            <person name="Wood J."/>
            <person name="Clark S."/>
            <person name="Pelan S."/>
            <person name="Griffiths G."/>
            <person name="Smith M."/>
            <person name="Glithero R."/>
            <person name="Howden P."/>
            <person name="Barker N."/>
            <person name="Lloyd C."/>
            <person name="Stevens C."/>
            <person name="Harley J."/>
            <person name="Holt K."/>
            <person name="Panagiotidis G."/>
            <person name="Lovell J."/>
            <person name="Beasley H."/>
            <person name="Henderson C."/>
            <person name="Gordon D."/>
            <person name="Auger K."/>
            <person name="Wright D."/>
            <person name="Collins J."/>
            <person name="Raisen C."/>
            <person name="Dyer L."/>
            <person name="Leung K."/>
            <person name="Robertson L."/>
            <person name="Ambridge K."/>
            <person name="Leongamornlert D."/>
            <person name="McGuire S."/>
            <person name="Gilderthorp R."/>
            <person name="Griffiths C."/>
            <person name="Manthravadi D."/>
            <person name="Nichol S."/>
            <person name="Barker G."/>
            <person name="Whitehead S."/>
            <person name="Kay M."/>
            <person name="Brown J."/>
            <person name="Murnane C."/>
            <person name="Gray E."/>
            <person name="Humphries M."/>
            <person name="Sycamore N."/>
            <person name="Barker D."/>
            <person name="Saunders D."/>
            <person name="Wallis J."/>
            <person name="Babbage A."/>
            <person name="Hammond S."/>
            <person name="Mashreghi-Mohammadi M."/>
            <person name="Barr L."/>
            <person name="Martin S."/>
            <person name="Wray P."/>
            <person name="Ellington A."/>
            <person name="Matthews N."/>
            <person name="Ellwood M."/>
            <person name="Woodmansey R."/>
            <person name="Clark G."/>
            <person name="Cooper J."/>
            <person name="Tromans A."/>
            <person name="Grafham D."/>
            <person name="Skuce C."/>
            <person name="Pandian R."/>
            <person name="Andrews R."/>
            <person name="Harrison E."/>
            <person name="Kimberley A."/>
            <person name="Garnett J."/>
            <person name="Fosker N."/>
            <person name="Hall R."/>
            <person name="Garner P."/>
            <person name="Kelly D."/>
            <person name="Bird C."/>
            <person name="Palmer S."/>
            <person name="Gehring I."/>
            <person name="Berger A."/>
            <person name="Dooley C.M."/>
            <person name="Ersan-Urun Z."/>
            <person name="Eser C."/>
            <person name="Geiger H."/>
            <person name="Geisler M."/>
            <person name="Karotki L."/>
            <person name="Kirn A."/>
            <person name="Konantz J."/>
            <person name="Konantz M."/>
            <person name="Oberlander M."/>
            <person name="Rudolph-Geiger S."/>
            <person name="Teucke M."/>
            <person name="Lanz C."/>
            <person name="Raddatz G."/>
            <person name="Osoegawa K."/>
            <person name="Zhu B."/>
            <person name="Rapp A."/>
            <person name="Widaa S."/>
            <person name="Langford C."/>
            <person name="Yang F."/>
            <person name="Schuster S.C."/>
            <person name="Carter N.P."/>
            <person name="Harrow J."/>
            <person name="Ning Z."/>
            <person name="Herrero J."/>
            <person name="Searle S.M."/>
            <person name="Enright A."/>
            <person name="Geisler R."/>
            <person name="Plasterk R.H."/>
            <person name="Lee C."/>
            <person name="Westerfield M."/>
            <person name="de Jong P.J."/>
            <person name="Zon L.I."/>
            <person name="Postlethwait J.H."/>
            <person name="Nusslein-Volhard C."/>
            <person name="Hubbard T.J."/>
            <person name="Roest Crollius H."/>
            <person name="Rogers J."/>
            <person name="Stemple D.L."/>
        </authorList>
    </citation>
    <scope>NUCLEOTIDE SEQUENCE [LARGE SCALE GENOMIC DNA]</scope>
    <source>
        <strain>Tuebingen</strain>
    </source>
</reference>
<reference evidence="15" key="3">
    <citation type="submission" date="2008-04" db="EMBL/GenBank/DDBJ databases">
        <authorList>
            <consortium name="NIH - Zebrafish Gene Collection (ZGC) project"/>
        </authorList>
    </citation>
    <scope>NUCLEOTIDE SEQUENCE [LARGE SCALE MRNA]</scope>
</reference>
<reference key="4">
    <citation type="journal article" date="1997" name="Mol. Endocrinol.">
        <title>Teleost FTZ-F1 homolog and its splicing variant determine the expression of the salmon gonadotropin IIbeta subunit gene.</title>
        <authorList>
            <person name="Liu D."/>
            <person name="Le Drean Y."/>
            <person name="Ekker M."/>
            <person name="Xiong F."/>
            <person name="Hew C.L."/>
        </authorList>
    </citation>
    <scope>ALTERNATIVE SPLICING</scope>
</reference>
<reference key="5">
    <citation type="journal article" date="2000" name="J. Biol. Chem.">
        <title>A zebrafish ftz-F1 (Fushi tarazu factor 1) homologue requires multiple subdomains in the D and E regions for its transcriptional activity.</title>
        <authorList>
            <person name="Liu D."/>
            <person name="Chandy M."/>
            <person name="Lee S.K."/>
            <person name="Le Drean Y."/>
            <person name="Ando H."/>
            <person name="Xiong F."/>
            <person name="Woon Lee J."/>
            <person name="Hew C.L."/>
        </authorList>
    </citation>
    <scope>ALTERNATIVE SPLICING</scope>
    <scope>FUNCTION (ISOFORM 3)</scope>
    <scope>MUTAGENESIS OF 475-LEU-LEU-476</scope>
</reference>
<reference key="6">
    <citation type="journal article" date="2003" name="Mol. Cell. Biol.">
        <title>Prox1 is a novel coregulator of Ff1b and is involved in the embryonic development of the zebra fish interrenal primordium.</title>
        <authorList>
            <person name="Liu Y.W."/>
            <person name="Gao W."/>
            <person name="Teh H.L."/>
            <person name="Tan J.H."/>
            <person name="Chan W.K."/>
        </authorList>
    </citation>
    <scope>FUNCTION</scope>
</reference>
<reference key="7">
    <citation type="journal article" date="2009" name="Comp. Biochem. Physiol.">
        <title>Sox9a regulation of ff1a in zebrafish (Danio rerio) suggests an involvement of ff1a in cartilage development.</title>
        <authorList>
            <person name="Koskinen J."/>
            <person name="Karlsson J."/>
            <person name="Olsson P.E."/>
        </authorList>
    </citation>
    <scope>FUNCTION</scope>
</reference>
<reference key="8">
    <citation type="journal article" date="2016" name="Dev. Biol.">
        <title>Iterative use of nuclear receptor Nr5a2 regulates multiple stages of liver and pancreas development.</title>
        <authorList>
            <person name="Nissim S."/>
            <person name="Weeks O."/>
            <person name="Talbot J.C."/>
            <person name="Hedgepeth J.W."/>
            <person name="Wucherpfennig J."/>
            <person name="Schatzman-Bone S."/>
            <person name="Swinburne I."/>
            <person name="Cortes M."/>
            <person name="Alexa K."/>
            <person name="Megason S."/>
            <person name="North T.E."/>
            <person name="Amacher S.L."/>
            <person name="Goessling W."/>
        </authorList>
    </citation>
    <scope>FUNCTION</scope>
    <scope>DEVELOPMENTAL STAGE</scope>
    <scope>DISRUPTION PHENOTYPE</scope>
</reference>
<reference key="9">
    <citation type="journal article" date="2017" name="J. Genet. Genomics">
        <title>LRH-1 senses signaling from phosphatidylcholine to regulate the expansion growth of digestive organs via synergy with Wnt/beta-catenin signaling in zebrafish.</title>
        <authorList>
            <person name="Zhai G."/>
            <person name="Song J."/>
            <person name="Shu T."/>
            <person name="Yan J."/>
            <person name="Jin X."/>
            <person name="He J."/>
            <person name="Yin Z."/>
        </authorList>
    </citation>
    <scope>FUNCTION</scope>
    <scope>DISRUPTION PHENOTYPE</scope>
</reference>
<reference key="10">
    <citation type="journal article" date="2023" name="Dev. Cell">
        <title>Nuclear receptor Nr5a2 promotes diverse connective tissue fates in the jaw.</title>
        <authorList>
            <person name="Chen H.J."/>
            <person name="Barske L."/>
            <person name="Talbot J.C."/>
            <person name="Dinwoodie O.M."/>
            <person name="Roberts R.R."/>
            <person name="Farmer D.T."/>
            <person name="Jimenez C."/>
            <person name="Merrill A.E."/>
            <person name="Tucker A.S."/>
            <person name="Crump J.G."/>
        </authorList>
    </citation>
    <scope>FUNCTION</scope>
    <scope>DISRUPTION PHENOTYPE</scope>
</reference>